<accession>P21883</accession>
<evidence type="ECO:0000250" key="1"/>
<evidence type="ECO:0000255" key="2"/>
<evidence type="ECO:0000255" key="3">
    <source>
        <dbReference type="PROSITE-ProRule" id="PRU01066"/>
    </source>
</evidence>
<evidence type="ECO:0000255" key="4">
    <source>
        <dbReference type="PROSITE-ProRule" id="PRU01170"/>
    </source>
</evidence>
<evidence type="ECO:0000256" key="5">
    <source>
        <dbReference type="SAM" id="MobiDB-lite"/>
    </source>
</evidence>
<evidence type="ECO:0000269" key="6">
    <source>
    </source>
</evidence>
<evidence type="ECO:0000305" key="7"/>
<comment type="function">
    <text>The pyruvate dehydrogenase complex catalyzes the overall conversion of pyruvate to acetyl-CoA and CO(2). It contains multiple copies of three enzymatic components: pyruvate dehydrogenase (E1), dihydrolipoamide acetyltransferase (E2) and lipoamide dehydrogenase (E3).</text>
</comment>
<comment type="function">
    <text>The B.subtilis PDH complex also possesses branched-chain 2-oxoacid dehydrogenase (BCDH) activity.</text>
</comment>
<comment type="catalytic activity">
    <reaction>
        <text>N(6)-[(R)-dihydrolipoyl]-L-lysyl-[protein] + acetyl-CoA = N(6)-[(R)-S(8)-acetyldihydrolipoyl]-L-lysyl-[protein] + CoA</text>
        <dbReference type="Rhea" id="RHEA:17017"/>
        <dbReference type="Rhea" id="RHEA-COMP:10475"/>
        <dbReference type="Rhea" id="RHEA-COMP:10478"/>
        <dbReference type="ChEBI" id="CHEBI:57287"/>
        <dbReference type="ChEBI" id="CHEBI:57288"/>
        <dbReference type="ChEBI" id="CHEBI:83100"/>
        <dbReference type="ChEBI" id="CHEBI:83111"/>
        <dbReference type="EC" id="2.3.1.12"/>
    </reaction>
</comment>
<comment type="cofactor">
    <cofactor>
        <name>(R)-lipoate</name>
        <dbReference type="ChEBI" id="CHEBI:83088"/>
    </cofactor>
    <text>Binds 1 lipoyl cofactor covalently.</text>
</comment>
<comment type="subunit">
    <text>Forms a 24-polypeptide structural core with octahedral symmetry.</text>
</comment>
<comment type="similarity">
    <text evidence="7">Belongs to the 2-oxoacid dehydrogenase family.</text>
</comment>
<keyword id="KW-0012">Acyltransferase</keyword>
<keyword id="KW-0450">Lipoyl</keyword>
<keyword id="KW-1185">Reference proteome</keyword>
<keyword id="KW-0808">Transferase</keyword>
<dbReference type="EC" id="2.3.1.12"/>
<dbReference type="EMBL" id="M57435">
    <property type="protein sequence ID" value="AAA62683.1"/>
    <property type="molecule type" value="Genomic_DNA"/>
</dbReference>
<dbReference type="EMBL" id="AF012285">
    <property type="protein sequence ID" value="AAC24934.1"/>
    <property type="molecule type" value="Genomic_DNA"/>
</dbReference>
<dbReference type="EMBL" id="AL009126">
    <property type="protein sequence ID" value="CAB13333.1"/>
    <property type="molecule type" value="Genomic_DNA"/>
</dbReference>
<dbReference type="PIR" id="D36718">
    <property type="entry name" value="D36718"/>
</dbReference>
<dbReference type="RefSeq" id="NP_389343.1">
    <property type="nucleotide sequence ID" value="NC_000964.3"/>
</dbReference>
<dbReference type="RefSeq" id="WP_003232311.1">
    <property type="nucleotide sequence ID" value="NZ_OZ025638.1"/>
</dbReference>
<dbReference type="SMR" id="P21883"/>
<dbReference type="FunCoup" id="P21883">
    <property type="interactions" value="533"/>
</dbReference>
<dbReference type="IntAct" id="P21883">
    <property type="interactions" value="1"/>
</dbReference>
<dbReference type="STRING" id="224308.BSU14600"/>
<dbReference type="jPOST" id="P21883"/>
<dbReference type="PaxDb" id="224308-BSU14600"/>
<dbReference type="EnsemblBacteria" id="CAB13333">
    <property type="protein sequence ID" value="CAB13333"/>
    <property type="gene ID" value="BSU_14600"/>
</dbReference>
<dbReference type="GeneID" id="936010"/>
<dbReference type="KEGG" id="bsu:BSU14600"/>
<dbReference type="PATRIC" id="fig|224308.179.peg.1592"/>
<dbReference type="eggNOG" id="COG0508">
    <property type="taxonomic scope" value="Bacteria"/>
</dbReference>
<dbReference type="InParanoid" id="P21883"/>
<dbReference type="OrthoDB" id="9805770at2"/>
<dbReference type="PhylomeDB" id="P21883"/>
<dbReference type="BioCyc" id="BSUB:BSU14600-MONOMER"/>
<dbReference type="Proteomes" id="UP000001570">
    <property type="component" value="Chromosome"/>
</dbReference>
<dbReference type="GO" id="GO:0005829">
    <property type="term" value="C:cytosol"/>
    <property type="evidence" value="ECO:0000318"/>
    <property type="project" value="GO_Central"/>
</dbReference>
<dbReference type="GO" id="GO:0004742">
    <property type="term" value="F:dihydrolipoyllysine-residue acetyltransferase activity"/>
    <property type="evidence" value="ECO:0007669"/>
    <property type="project" value="UniProtKB-EC"/>
</dbReference>
<dbReference type="GO" id="GO:0004149">
    <property type="term" value="F:dihydrolipoyllysine-residue succinyltransferase activity"/>
    <property type="evidence" value="ECO:0000318"/>
    <property type="project" value="GO_Central"/>
</dbReference>
<dbReference type="GO" id="GO:0006099">
    <property type="term" value="P:tricarboxylic acid cycle"/>
    <property type="evidence" value="ECO:0000318"/>
    <property type="project" value="GO_Central"/>
</dbReference>
<dbReference type="CDD" id="cd06849">
    <property type="entry name" value="lipoyl_domain"/>
    <property type="match status" value="1"/>
</dbReference>
<dbReference type="FunFam" id="3.30.559.10:FF:000007">
    <property type="entry name" value="Dihydrolipoamide acetyltransferase component of pyruvate dehydrogenase complex"/>
    <property type="match status" value="1"/>
</dbReference>
<dbReference type="FunFam" id="4.10.320.10:FF:000011">
    <property type="entry name" value="Dihydrolipoamide acetyltransferase component of pyruvate dehydrogenase complex"/>
    <property type="match status" value="1"/>
</dbReference>
<dbReference type="Gene3D" id="2.40.50.100">
    <property type="match status" value="1"/>
</dbReference>
<dbReference type="Gene3D" id="3.30.559.10">
    <property type="entry name" value="Chloramphenicol acetyltransferase-like domain"/>
    <property type="match status" value="1"/>
</dbReference>
<dbReference type="Gene3D" id="4.10.320.10">
    <property type="entry name" value="E3-binding domain"/>
    <property type="match status" value="1"/>
</dbReference>
<dbReference type="InterPro" id="IPR003016">
    <property type="entry name" value="2-oxoA_DH_lipoyl-BS"/>
</dbReference>
<dbReference type="InterPro" id="IPR001078">
    <property type="entry name" value="2-oxoacid_DH_actylTfrase"/>
</dbReference>
<dbReference type="InterPro" id="IPR050743">
    <property type="entry name" value="2-oxoacid_DH_E2_comp"/>
</dbReference>
<dbReference type="InterPro" id="IPR000089">
    <property type="entry name" value="Biotin_lipoyl"/>
</dbReference>
<dbReference type="InterPro" id="IPR023213">
    <property type="entry name" value="CAT-like_dom_sf"/>
</dbReference>
<dbReference type="InterPro" id="IPR036625">
    <property type="entry name" value="E3-bd_dom_sf"/>
</dbReference>
<dbReference type="InterPro" id="IPR004167">
    <property type="entry name" value="PSBD"/>
</dbReference>
<dbReference type="InterPro" id="IPR011053">
    <property type="entry name" value="Single_hybrid_motif"/>
</dbReference>
<dbReference type="PANTHER" id="PTHR43178">
    <property type="entry name" value="DIHYDROLIPOAMIDE ACETYLTRANSFERASE COMPONENT OF PYRUVATE DEHYDROGENASE COMPLEX"/>
    <property type="match status" value="1"/>
</dbReference>
<dbReference type="PANTHER" id="PTHR43178:SF5">
    <property type="entry name" value="LIPOAMIDE ACYLTRANSFERASE COMPONENT OF BRANCHED-CHAIN ALPHA-KETO ACID DEHYDROGENASE COMPLEX, MITOCHONDRIAL"/>
    <property type="match status" value="1"/>
</dbReference>
<dbReference type="Pfam" id="PF00198">
    <property type="entry name" value="2-oxoacid_dh"/>
    <property type="match status" value="1"/>
</dbReference>
<dbReference type="Pfam" id="PF00364">
    <property type="entry name" value="Biotin_lipoyl"/>
    <property type="match status" value="1"/>
</dbReference>
<dbReference type="Pfam" id="PF02817">
    <property type="entry name" value="E3_binding"/>
    <property type="match status" value="1"/>
</dbReference>
<dbReference type="SUPFAM" id="SSF52777">
    <property type="entry name" value="CoA-dependent acyltransferases"/>
    <property type="match status" value="1"/>
</dbReference>
<dbReference type="SUPFAM" id="SSF47005">
    <property type="entry name" value="Peripheral subunit-binding domain of 2-oxo acid dehydrogenase complex"/>
    <property type="match status" value="1"/>
</dbReference>
<dbReference type="SUPFAM" id="SSF51230">
    <property type="entry name" value="Single hybrid motif"/>
    <property type="match status" value="1"/>
</dbReference>
<dbReference type="PROSITE" id="PS50968">
    <property type="entry name" value="BIOTINYL_LIPOYL"/>
    <property type="match status" value="1"/>
</dbReference>
<dbReference type="PROSITE" id="PS00189">
    <property type="entry name" value="LIPOYL"/>
    <property type="match status" value="1"/>
</dbReference>
<dbReference type="PROSITE" id="PS51826">
    <property type="entry name" value="PSBD"/>
    <property type="match status" value="1"/>
</dbReference>
<gene>
    <name type="primary">pdhC</name>
    <name type="synonym">aceC</name>
    <name type="ordered locus">BSU14600</name>
</gene>
<protein>
    <recommendedName>
        <fullName>Dihydrolipoyllysine-residue acetyltransferase component of pyruvate dehydrogenase complex</fullName>
        <ecNumber>2.3.1.12</ecNumber>
    </recommendedName>
    <alternativeName>
        <fullName>Dihydrolipoamide acetyltransferase component of pyruvate dehydrogenase complex</fullName>
    </alternativeName>
    <alternativeName>
        <fullName>E2</fullName>
    </alternativeName>
    <alternativeName>
        <fullName>S complex, 48 kDa subunit</fullName>
    </alternativeName>
</protein>
<feature type="initiator methionine" description="Removed" evidence="1">
    <location>
        <position position="1"/>
    </location>
</feature>
<feature type="chain" id="PRO_0000162274" description="Dihydrolipoyllysine-residue acetyltransferase component of pyruvate dehydrogenase complex">
    <location>
        <begin position="2"/>
        <end position="442"/>
    </location>
</feature>
<feature type="domain" description="Lipoyl-binding" evidence="3">
    <location>
        <begin position="2"/>
        <end position="77"/>
    </location>
</feature>
<feature type="domain" description="Peripheral subunit-binding (PSBD)" evidence="4">
    <location>
        <begin position="141"/>
        <end position="178"/>
    </location>
</feature>
<feature type="region of interest" description="Disordered" evidence="5">
    <location>
        <begin position="84"/>
        <end position="136"/>
    </location>
</feature>
<feature type="region of interest" description="Disordered" evidence="5">
    <location>
        <begin position="182"/>
        <end position="215"/>
    </location>
</feature>
<feature type="compositionally biased region" description="Basic and acidic residues" evidence="5">
    <location>
        <begin position="84"/>
        <end position="97"/>
    </location>
</feature>
<feature type="compositionally biased region" description="Low complexity" evidence="5">
    <location>
        <begin position="182"/>
        <end position="208"/>
    </location>
</feature>
<feature type="active site" evidence="2">
    <location>
        <position position="413"/>
    </location>
</feature>
<feature type="modified residue" description="N6-lipoyllysine" evidence="3 6">
    <location>
        <position position="43"/>
    </location>
</feature>
<reference key="1">
    <citation type="journal article" date="1990" name="J. Bacteriol.">
        <title>Secretory S complex of Bacillus subtilis: sequence analysis and identity to pyruvate dehydrogenase.</title>
        <authorList>
            <person name="Hemilae H.O."/>
            <person name="Palva A."/>
            <person name="Paulin L."/>
            <person name="Arvidson S."/>
            <person name="Palva I."/>
        </authorList>
    </citation>
    <scope>NUCLEOTIDE SEQUENCE [GENOMIC DNA]</scope>
    <scope>LIPOYLATION AT LYS-43</scope>
    <source>
        <strain>168</strain>
    </source>
</reference>
<reference key="2">
    <citation type="journal article" date="1996" name="Microbiology">
        <title>The ampS-nprE (124 degrees-127 degrees) region of the Bacillus subtilis 168 chromosome: sequencing of a 27 kb segment and identification of several genes in the area.</title>
        <authorList>
            <person name="Winters P."/>
            <person name="Caldwell R.M."/>
            <person name="Enfield L."/>
            <person name="Ferrari E."/>
        </authorList>
    </citation>
    <scope>NUCLEOTIDE SEQUENCE [GENOMIC DNA]</scope>
    <source>
        <strain>168</strain>
    </source>
</reference>
<reference key="3">
    <citation type="submission" date="1997-07" db="EMBL/GenBank/DDBJ databases">
        <title>Sequence analysis of the mobA-ampS region of the Bacillus subtilis chromosome.</title>
        <authorList>
            <person name="Caldwell R.M."/>
            <person name="Ferrari E."/>
        </authorList>
    </citation>
    <scope>NUCLEOTIDE SEQUENCE [GENOMIC DNA]</scope>
    <source>
        <strain>168</strain>
    </source>
</reference>
<reference key="4">
    <citation type="journal article" date="1997" name="Nature">
        <title>The complete genome sequence of the Gram-positive bacterium Bacillus subtilis.</title>
        <authorList>
            <person name="Kunst F."/>
            <person name="Ogasawara N."/>
            <person name="Moszer I."/>
            <person name="Albertini A.M."/>
            <person name="Alloni G."/>
            <person name="Azevedo V."/>
            <person name="Bertero M.G."/>
            <person name="Bessieres P."/>
            <person name="Bolotin A."/>
            <person name="Borchert S."/>
            <person name="Borriss R."/>
            <person name="Boursier L."/>
            <person name="Brans A."/>
            <person name="Braun M."/>
            <person name="Brignell S.C."/>
            <person name="Bron S."/>
            <person name="Brouillet S."/>
            <person name="Bruschi C.V."/>
            <person name="Caldwell B."/>
            <person name="Capuano V."/>
            <person name="Carter N.M."/>
            <person name="Choi S.-K."/>
            <person name="Codani J.-J."/>
            <person name="Connerton I.F."/>
            <person name="Cummings N.J."/>
            <person name="Daniel R.A."/>
            <person name="Denizot F."/>
            <person name="Devine K.M."/>
            <person name="Duesterhoeft A."/>
            <person name="Ehrlich S.D."/>
            <person name="Emmerson P.T."/>
            <person name="Entian K.-D."/>
            <person name="Errington J."/>
            <person name="Fabret C."/>
            <person name="Ferrari E."/>
            <person name="Foulger D."/>
            <person name="Fritz C."/>
            <person name="Fujita M."/>
            <person name="Fujita Y."/>
            <person name="Fuma S."/>
            <person name="Galizzi A."/>
            <person name="Galleron N."/>
            <person name="Ghim S.-Y."/>
            <person name="Glaser P."/>
            <person name="Goffeau A."/>
            <person name="Golightly E.J."/>
            <person name="Grandi G."/>
            <person name="Guiseppi G."/>
            <person name="Guy B.J."/>
            <person name="Haga K."/>
            <person name="Haiech J."/>
            <person name="Harwood C.R."/>
            <person name="Henaut A."/>
            <person name="Hilbert H."/>
            <person name="Holsappel S."/>
            <person name="Hosono S."/>
            <person name="Hullo M.-F."/>
            <person name="Itaya M."/>
            <person name="Jones L.-M."/>
            <person name="Joris B."/>
            <person name="Karamata D."/>
            <person name="Kasahara Y."/>
            <person name="Klaerr-Blanchard M."/>
            <person name="Klein C."/>
            <person name="Kobayashi Y."/>
            <person name="Koetter P."/>
            <person name="Koningstein G."/>
            <person name="Krogh S."/>
            <person name="Kumano M."/>
            <person name="Kurita K."/>
            <person name="Lapidus A."/>
            <person name="Lardinois S."/>
            <person name="Lauber J."/>
            <person name="Lazarevic V."/>
            <person name="Lee S.-M."/>
            <person name="Levine A."/>
            <person name="Liu H."/>
            <person name="Masuda S."/>
            <person name="Mauel C."/>
            <person name="Medigue C."/>
            <person name="Medina N."/>
            <person name="Mellado R.P."/>
            <person name="Mizuno M."/>
            <person name="Moestl D."/>
            <person name="Nakai S."/>
            <person name="Noback M."/>
            <person name="Noone D."/>
            <person name="O'Reilly M."/>
            <person name="Ogawa K."/>
            <person name="Ogiwara A."/>
            <person name="Oudega B."/>
            <person name="Park S.-H."/>
            <person name="Parro V."/>
            <person name="Pohl T.M."/>
            <person name="Portetelle D."/>
            <person name="Porwollik S."/>
            <person name="Prescott A.M."/>
            <person name="Presecan E."/>
            <person name="Pujic P."/>
            <person name="Purnelle B."/>
            <person name="Rapoport G."/>
            <person name="Rey M."/>
            <person name="Reynolds S."/>
            <person name="Rieger M."/>
            <person name="Rivolta C."/>
            <person name="Rocha E."/>
            <person name="Roche B."/>
            <person name="Rose M."/>
            <person name="Sadaie Y."/>
            <person name="Sato T."/>
            <person name="Scanlan E."/>
            <person name="Schleich S."/>
            <person name="Schroeter R."/>
            <person name="Scoffone F."/>
            <person name="Sekiguchi J."/>
            <person name="Sekowska A."/>
            <person name="Seror S.J."/>
            <person name="Serror P."/>
            <person name="Shin B.-S."/>
            <person name="Soldo B."/>
            <person name="Sorokin A."/>
            <person name="Tacconi E."/>
            <person name="Takagi T."/>
            <person name="Takahashi H."/>
            <person name="Takemaru K."/>
            <person name="Takeuchi M."/>
            <person name="Tamakoshi A."/>
            <person name="Tanaka T."/>
            <person name="Terpstra P."/>
            <person name="Tognoni A."/>
            <person name="Tosato V."/>
            <person name="Uchiyama S."/>
            <person name="Vandenbol M."/>
            <person name="Vannier F."/>
            <person name="Vassarotti A."/>
            <person name="Viari A."/>
            <person name="Wambutt R."/>
            <person name="Wedler E."/>
            <person name="Wedler H."/>
            <person name="Weitzenegger T."/>
            <person name="Winters P."/>
            <person name="Wipat A."/>
            <person name="Yamamoto H."/>
            <person name="Yamane K."/>
            <person name="Yasumoto K."/>
            <person name="Yata K."/>
            <person name="Yoshida K."/>
            <person name="Yoshikawa H.-F."/>
            <person name="Zumstein E."/>
            <person name="Yoshikawa H."/>
            <person name="Danchin A."/>
        </authorList>
    </citation>
    <scope>NUCLEOTIDE SEQUENCE [LARGE SCALE GENOMIC DNA]</scope>
    <source>
        <strain>168</strain>
    </source>
</reference>
<proteinExistence type="evidence at protein level"/>
<sequence>MAFEFKLPDIGEGIHEGEIVKWFVKPNDEVDEDDVLAEVQNDKAVVEIPSPVKGKVLELKVEEGTVATVGQTIITFDAPGYEDLQFKGSDESDDAKTEAQVQSTAEAGQDVAKEEQAQEPAKATGAGQQDQAEVDPNKRVIAMPSVRKYAREKGVDIRKVTGSGNNGRVVKEDIDSFVNGGAQEAAPQETAAPQETAAKPAAAPAPEGEFPETREKMSGIRKAIAKAMVNSKHTAPHVTLMDEVDVTNLVAHRKQFKQVAADQGIKLTYLPYVVKALTSALKKFPVLNTSIDDKTDEVIQKHYFNIGIAADTEKGLLVPVVKNADRKSVFEISDEINGLATKAREGKLAPAEMKGASCTITNIGSAGGQWFTPVINHPEVAILGIGRIAEKAIVRDGEIVAAPVLALSLSFDHRMIDGATAQNALNHIKRLLNDPQLILMEA</sequence>
<name>ODP2_BACSU</name>
<organism>
    <name type="scientific">Bacillus subtilis (strain 168)</name>
    <dbReference type="NCBI Taxonomy" id="224308"/>
    <lineage>
        <taxon>Bacteria</taxon>
        <taxon>Bacillati</taxon>
        <taxon>Bacillota</taxon>
        <taxon>Bacilli</taxon>
        <taxon>Bacillales</taxon>
        <taxon>Bacillaceae</taxon>
        <taxon>Bacillus</taxon>
    </lineage>
</organism>